<dbReference type="EMBL" id="CP001111">
    <property type="protein sequence ID" value="ACF49706.1"/>
    <property type="molecule type" value="Genomic_DNA"/>
</dbReference>
<dbReference type="RefSeq" id="WP_012509599.1">
    <property type="nucleotide sequence ID" value="NC_011071.1"/>
</dbReference>
<dbReference type="SMR" id="B4SU11"/>
<dbReference type="STRING" id="391008.Smal_0001"/>
<dbReference type="KEGG" id="smt:Smal_0001"/>
<dbReference type="eggNOG" id="COG0593">
    <property type="taxonomic scope" value="Bacteria"/>
</dbReference>
<dbReference type="HOGENOM" id="CLU_026910_0_1_6"/>
<dbReference type="OrthoDB" id="9807019at2"/>
<dbReference type="Proteomes" id="UP000001867">
    <property type="component" value="Chromosome"/>
</dbReference>
<dbReference type="GO" id="GO:0005737">
    <property type="term" value="C:cytoplasm"/>
    <property type="evidence" value="ECO:0007669"/>
    <property type="project" value="UniProtKB-SubCell"/>
</dbReference>
<dbReference type="GO" id="GO:0005886">
    <property type="term" value="C:plasma membrane"/>
    <property type="evidence" value="ECO:0007669"/>
    <property type="project" value="TreeGrafter"/>
</dbReference>
<dbReference type="GO" id="GO:0005524">
    <property type="term" value="F:ATP binding"/>
    <property type="evidence" value="ECO:0007669"/>
    <property type="project" value="UniProtKB-UniRule"/>
</dbReference>
<dbReference type="GO" id="GO:0016887">
    <property type="term" value="F:ATP hydrolysis activity"/>
    <property type="evidence" value="ECO:0007669"/>
    <property type="project" value="InterPro"/>
</dbReference>
<dbReference type="GO" id="GO:0003688">
    <property type="term" value="F:DNA replication origin binding"/>
    <property type="evidence" value="ECO:0007669"/>
    <property type="project" value="UniProtKB-UniRule"/>
</dbReference>
<dbReference type="GO" id="GO:0008289">
    <property type="term" value="F:lipid binding"/>
    <property type="evidence" value="ECO:0007669"/>
    <property type="project" value="UniProtKB-KW"/>
</dbReference>
<dbReference type="GO" id="GO:0006270">
    <property type="term" value="P:DNA replication initiation"/>
    <property type="evidence" value="ECO:0007669"/>
    <property type="project" value="UniProtKB-UniRule"/>
</dbReference>
<dbReference type="GO" id="GO:0006275">
    <property type="term" value="P:regulation of DNA replication"/>
    <property type="evidence" value="ECO:0007669"/>
    <property type="project" value="UniProtKB-UniRule"/>
</dbReference>
<dbReference type="CDD" id="cd06571">
    <property type="entry name" value="Bac_DnaA_C"/>
    <property type="match status" value="1"/>
</dbReference>
<dbReference type="FunFam" id="1.10.1750.10:FF:000001">
    <property type="entry name" value="Chromosomal replication initiator protein DnaA"/>
    <property type="match status" value="1"/>
</dbReference>
<dbReference type="FunFam" id="1.10.8.60:FF:000003">
    <property type="entry name" value="Chromosomal replication initiator protein DnaA"/>
    <property type="match status" value="1"/>
</dbReference>
<dbReference type="FunFam" id="3.40.50.300:FF:000103">
    <property type="entry name" value="Chromosomal replication initiator protein DnaA"/>
    <property type="match status" value="1"/>
</dbReference>
<dbReference type="Gene3D" id="1.10.1750.10">
    <property type="match status" value="1"/>
</dbReference>
<dbReference type="Gene3D" id="1.10.8.60">
    <property type="match status" value="1"/>
</dbReference>
<dbReference type="Gene3D" id="3.30.300.180">
    <property type="match status" value="1"/>
</dbReference>
<dbReference type="Gene3D" id="3.40.50.300">
    <property type="entry name" value="P-loop containing nucleotide triphosphate hydrolases"/>
    <property type="match status" value="1"/>
</dbReference>
<dbReference type="HAMAP" id="MF_00377">
    <property type="entry name" value="DnaA_bact"/>
    <property type="match status" value="1"/>
</dbReference>
<dbReference type="InterPro" id="IPR003593">
    <property type="entry name" value="AAA+_ATPase"/>
</dbReference>
<dbReference type="InterPro" id="IPR001957">
    <property type="entry name" value="Chromosome_initiator_DnaA"/>
</dbReference>
<dbReference type="InterPro" id="IPR020591">
    <property type="entry name" value="Chromosome_initiator_DnaA-like"/>
</dbReference>
<dbReference type="InterPro" id="IPR018312">
    <property type="entry name" value="Chromosome_initiator_DnaA_CS"/>
</dbReference>
<dbReference type="InterPro" id="IPR013159">
    <property type="entry name" value="DnaA_C"/>
</dbReference>
<dbReference type="InterPro" id="IPR013317">
    <property type="entry name" value="DnaA_dom"/>
</dbReference>
<dbReference type="InterPro" id="IPR024633">
    <property type="entry name" value="DnaA_N_dom"/>
</dbReference>
<dbReference type="InterPro" id="IPR038454">
    <property type="entry name" value="DnaA_N_sf"/>
</dbReference>
<dbReference type="InterPro" id="IPR027417">
    <property type="entry name" value="P-loop_NTPase"/>
</dbReference>
<dbReference type="InterPro" id="IPR010921">
    <property type="entry name" value="Trp_repressor/repl_initiator"/>
</dbReference>
<dbReference type="NCBIfam" id="TIGR00362">
    <property type="entry name" value="DnaA"/>
    <property type="match status" value="1"/>
</dbReference>
<dbReference type="PANTHER" id="PTHR30050">
    <property type="entry name" value="CHROMOSOMAL REPLICATION INITIATOR PROTEIN DNAA"/>
    <property type="match status" value="1"/>
</dbReference>
<dbReference type="PANTHER" id="PTHR30050:SF2">
    <property type="entry name" value="CHROMOSOMAL REPLICATION INITIATOR PROTEIN DNAA"/>
    <property type="match status" value="1"/>
</dbReference>
<dbReference type="Pfam" id="PF00308">
    <property type="entry name" value="Bac_DnaA"/>
    <property type="match status" value="1"/>
</dbReference>
<dbReference type="Pfam" id="PF08299">
    <property type="entry name" value="Bac_DnaA_C"/>
    <property type="match status" value="1"/>
</dbReference>
<dbReference type="Pfam" id="PF11638">
    <property type="entry name" value="DnaA_N"/>
    <property type="match status" value="1"/>
</dbReference>
<dbReference type="PRINTS" id="PR00051">
    <property type="entry name" value="DNAA"/>
</dbReference>
<dbReference type="SMART" id="SM00382">
    <property type="entry name" value="AAA"/>
    <property type="match status" value="1"/>
</dbReference>
<dbReference type="SMART" id="SM00760">
    <property type="entry name" value="Bac_DnaA_C"/>
    <property type="match status" value="1"/>
</dbReference>
<dbReference type="SUPFAM" id="SSF52540">
    <property type="entry name" value="P-loop containing nucleoside triphosphate hydrolases"/>
    <property type="match status" value="1"/>
</dbReference>
<dbReference type="SUPFAM" id="SSF48295">
    <property type="entry name" value="TrpR-like"/>
    <property type="match status" value="1"/>
</dbReference>
<dbReference type="PROSITE" id="PS01008">
    <property type="entry name" value="DNAA"/>
    <property type="match status" value="1"/>
</dbReference>
<gene>
    <name evidence="1" type="primary">dnaA</name>
    <name type="ordered locus">Smal_0001</name>
</gene>
<feature type="chain" id="PRO_1000122021" description="Chromosomal replication initiator protein DnaA">
    <location>
        <begin position="1"/>
        <end position="443"/>
    </location>
</feature>
<feature type="region of interest" description="Domain I, interacts with DnaA modulators" evidence="1">
    <location>
        <begin position="1"/>
        <end position="67"/>
    </location>
</feature>
<feature type="region of interest" description="Domain II" evidence="1">
    <location>
        <begin position="67"/>
        <end position="105"/>
    </location>
</feature>
<feature type="region of interest" description="Domain III, AAA+ region" evidence="1">
    <location>
        <begin position="106"/>
        <end position="323"/>
    </location>
</feature>
<feature type="region of interest" description="Domain IV, binds dsDNA" evidence="1">
    <location>
        <begin position="324"/>
        <end position="443"/>
    </location>
</feature>
<feature type="binding site" evidence="1">
    <location>
        <position position="151"/>
    </location>
    <ligand>
        <name>ATP</name>
        <dbReference type="ChEBI" id="CHEBI:30616"/>
    </ligand>
</feature>
<feature type="binding site" evidence="1">
    <location>
        <position position="153"/>
    </location>
    <ligand>
        <name>ATP</name>
        <dbReference type="ChEBI" id="CHEBI:30616"/>
    </ligand>
</feature>
<feature type="binding site" evidence="1">
    <location>
        <position position="154"/>
    </location>
    <ligand>
        <name>ATP</name>
        <dbReference type="ChEBI" id="CHEBI:30616"/>
    </ligand>
</feature>
<feature type="binding site" evidence="1">
    <location>
        <position position="155"/>
    </location>
    <ligand>
        <name>ATP</name>
        <dbReference type="ChEBI" id="CHEBI:30616"/>
    </ligand>
</feature>
<name>DNAA_STRM5</name>
<protein>
    <recommendedName>
        <fullName evidence="1">Chromosomal replication initiator protein DnaA</fullName>
    </recommendedName>
</protein>
<reference key="1">
    <citation type="submission" date="2008-06" db="EMBL/GenBank/DDBJ databases">
        <title>Complete sequence of Stenotrophomonas maltophilia R551-3.</title>
        <authorList>
            <consortium name="US DOE Joint Genome Institute"/>
            <person name="Lucas S."/>
            <person name="Copeland A."/>
            <person name="Lapidus A."/>
            <person name="Glavina del Rio T."/>
            <person name="Dalin E."/>
            <person name="Tice H."/>
            <person name="Pitluck S."/>
            <person name="Chain P."/>
            <person name="Malfatti S."/>
            <person name="Shin M."/>
            <person name="Vergez L."/>
            <person name="Lang D."/>
            <person name="Schmutz J."/>
            <person name="Larimer F."/>
            <person name="Land M."/>
            <person name="Hauser L."/>
            <person name="Kyrpides N."/>
            <person name="Mikhailova N."/>
            <person name="Taghavi S."/>
            <person name="Monchy S."/>
            <person name="Newman L."/>
            <person name="Vangronsveld J."/>
            <person name="van der Lelie D."/>
            <person name="Richardson P."/>
        </authorList>
    </citation>
    <scope>NUCLEOTIDE SEQUENCE [LARGE SCALE GENOMIC DNA]</scope>
    <source>
        <strain>R551-3</strain>
    </source>
</reference>
<keyword id="KW-0067">ATP-binding</keyword>
<keyword id="KW-0963">Cytoplasm</keyword>
<keyword id="KW-0235">DNA replication</keyword>
<keyword id="KW-0238">DNA-binding</keyword>
<keyword id="KW-0446">Lipid-binding</keyword>
<keyword id="KW-0547">Nucleotide-binding</keyword>
<evidence type="ECO:0000255" key="1">
    <source>
        <dbReference type="HAMAP-Rule" id="MF_00377"/>
    </source>
</evidence>
<sequence length="443" mass="49979">MDAWSRSLERLEAEFPPEDVHTWLKPLQADLRVDSLVLYAPNAFIVDQVRELYLARIRELLAHFAGFSDVFLEIGSRPRPVEAQNAPFSTPSAHVSSEPQVPFAGNLDNHYTFANFVEGRSNQLGLAAAFQAAQKPGDRAHNPLLLYGGTGLGKTHLMFAAGNAMRQANPGAKVLYLRSEQFFSAMIRALQEKTMDQFKRQFQQVDALLIDDIQFFAGKDRTQEEFFHTFNALFDGKQQIILTCDRYPREVEGLEARLKSRLAWGLSVAIEPPDFETRAAIVLAKARERGAEIPDDVAFLIAKKMRSNVRDLEGALNTLTARANFTGRAITTEFAQETLRDLLRAQQQAISIPNIQKTVADYYGLQIKDLLSKRRTRSLARPRQVAMALTKELTEHSLPEIGDAFAGRDHTTVLHACRQIRTLMEADGKLREDWDKLIRKLSE</sequence>
<proteinExistence type="inferred from homology"/>
<accession>B4SU11</accession>
<comment type="function">
    <text evidence="1">Plays an essential role in the initiation and regulation of chromosomal replication. ATP-DnaA binds to the origin of replication (oriC) to initiate formation of the DNA replication initiation complex once per cell cycle. Binds the DnaA box (a 9 base pair repeat at the origin) and separates the double-stranded (ds)DNA. Forms a right-handed helical filament on oriC DNA; dsDNA binds to the exterior of the filament while single-stranded (ss)DNA is stabiized in the filament's interior. The ATP-DnaA-oriC complex binds and stabilizes one strand of the AT-rich DNA unwinding element (DUE), permitting loading of DNA polymerase. After initiation quickly degrades to an ADP-DnaA complex that is not apt for DNA replication. Binds acidic phospholipids.</text>
</comment>
<comment type="subunit">
    <text evidence="1">Oligomerizes as a right-handed, spiral filament on DNA at oriC.</text>
</comment>
<comment type="subcellular location">
    <subcellularLocation>
        <location evidence="1">Cytoplasm</location>
    </subcellularLocation>
</comment>
<comment type="domain">
    <text evidence="1">Domain I is involved in oligomerization and binding regulators, domain II is flexibile and of varying length in different bacteria, domain III forms the AAA+ region, while domain IV binds dsDNA.</text>
</comment>
<comment type="similarity">
    <text evidence="1">Belongs to the DnaA family.</text>
</comment>
<organism>
    <name type="scientific">Stenotrophomonas maltophilia (strain R551-3)</name>
    <dbReference type="NCBI Taxonomy" id="391008"/>
    <lineage>
        <taxon>Bacteria</taxon>
        <taxon>Pseudomonadati</taxon>
        <taxon>Pseudomonadota</taxon>
        <taxon>Gammaproteobacteria</taxon>
        <taxon>Lysobacterales</taxon>
        <taxon>Lysobacteraceae</taxon>
        <taxon>Stenotrophomonas</taxon>
        <taxon>Stenotrophomonas maltophilia group</taxon>
    </lineage>
</organism>